<name>RR4_TRISY</name>
<reference key="1">
    <citation type="journal article" date="1997" name="Plant Syst. Evol.">
        <title>Phylogenetic analysis of Iridaceae with parsimony and distance methods using the plastid gene rps4.</title>
        <authorList>
            <person name="Souza-Chies T.T."/>
            <person name="Bittar G."/>
            <person name="Nadot S."/>
            <person name="Carter L."/>
            <person name="Besin E."/>
            <person name="Lejeune B.P."/>
        </authorList>
    </citation>
    <scope>NUCLEOTIDE SEQUENCE [GENOMIC DNA]</scope>
</reference>
<organism>
    <name type="scientific">Trimezia steyermarkii</name>
    <name type="common">Steyermark's trimezia</name>
    <dbReference type="NCBI Taxonomy" id="58979"/>
    <lineage>
        <taxon>Eukaryota</taxon>
        <taxon>Viridiplantae</taxon>
        <taxon>Streptophyta</taxon>
        <taxon>Embryophyta</taxon>
        <taxon>Tracheophyta</taxon>
        <taxon>Spermatophyta</taxon>
        <taxon>Magnoliopsida</taxon>
        <taxon>Liliopsida</taxon>
        <taxon>Asparagales</taxon>
        <taxon>Iridaceae</taxon>
        <taxon>Iridoideae</taxon>
        <taxon>Trimezieae</taxon>
        <taxon>Trimezia</taxon>
    </lineage>
</organism>
<evidence type="ECO:0000250" key="1"/>
<evidence type="ECO:0000305" key="2"/>
<sequence length="194" mass="22534">RFKKIRRLGALPGLTSKRPRSGSDLKNQLRSGKRSQYRIRLEEKQKLRFHYGLTERQLLKYVHIAGKAKGSTGRVLLQLLEMRLDNILFRLGMASTIPGARQLVNHRHILVNGRIVDIPSYRCKPQDIITTKDKERSKVLIQNYIASSSHEELPNHLTIDPLQYKGLVNQIIDRKWVGLKINELLVVEYYSRQT</sequence>
<feature type="chain" id="PRO_0000132678" description="Small ribosomal subunit protein uS4c">
    <location>
        <begin position="1" status="less than"/>
        <end position="194" status="greater than"/>
    </location>
</feature>
<feature type="domain" description="S4 RNA-binding">
    <location>
        <begin position="82"/>
        <end position="143"/>
    </location>
</feature>
<feature type="non-terminal residue">
    <location>
        <position position="1"/>
    </location>
</feature>
<feature type="non-terminal residue">
    <location>
        <position position="194"/>
    </location>
</feature>
<geneLocation type="chloroplast"/>
<dbReference type="EMBL" id="Z68264">
    <property type="protein sequence ID" value="CAA92562.1"/>
    <property type="molecule type" value="Genomic_DNA"/>
</dbReference>
<dbReference type="SMR" id="O20291"/>
<dbReference type="GO" id="GO:0009507">
    <property type="term" value="C:chloroplast"/>
    <property type="evidence" value="ECO:0007669"/>
    <property type="project" value="UniProtKB-SubCell"/>
</dbReference>
<dbReference type="GO" id="GO:0015935">
    <property type="term" value="C:small ribosomal subunit"/>
    <property type="evidence" value="ECO:0007669"/>
    <property type="project" value="InterPro"/>
</dbReference>
<dbReference type="GO" id="GO:0019843">
    <property type="term" value="F:rRNA binding"/>
    <property type="evidence" value="ECO:0007669"/>
    <property type="project" value="UniProtKB-KW"/>
</dbReference>
<dbReference type="GO" id="GO:0003735">
    <property type="term" value="F:structural constituent of ribosome"/>
    <property type="evidence" value="ECO:0007669"/>
    <property type="project" value="InterPro"/>
</dbReference>
<dbReference type="GO" id="GO:0042274">
    <property type="term" value="P:ribosomal small subunit biogenesis"/>
    <property type="evidence" value="ECO:0007669"/>
    <property type="project" value="TreeGrafter"/>
</dbReference>
<dbReference type="GO" id="GO:0006412">
    <property type="term" value="P:translation"/>
    <property type="evidence" value="ECO:0007669"/>
    <property type="project" value="InterPro"/>
</dbReference>
<dbReference type="CDD" id="cd00165">
    <property type="entry name" value="S4"/>
    <property type="match status" value="1"/>
</dbReference>
<dbReference type="FunFam" id="1.10.1050.10:FF:000002">
    <property type="entry name" value="30S ribosomal protein S4, chloroplastic"/>
    <property type="match status" value="1"/>
</dbReference>
<dbReference type="FunFam" id="3.10.290.10:FF:000081">
    <property type="entry name" value="30S ribosomal protein S4, chloroplastic"/>
    <property type="match status" value="1"/>
</dbReference>
<dbReference type="Gene3D" id="1.10.1050.10">
    <property type="entry name" value="Ribosomal Protein S4 Delta 41, Chain A, domain 1"/>
    <property type="match status" value="1"/>
</dbReference>
<dbReference type="Gene3D" id="3.10.290.10">
    <property type="entry name" value="RNA-binding S4 domain"/>
    <property type="match status" value="1"/>
</dbReference>
<dbReference type="HAMAP" id="MF_01306_B">
    <property type="entry name" value="Ribosomal_uS4_B"/>
    <property type="match status" value="1"/>
</dbReference>
<dbReference type="InterPro" id="IPR022801">
    <property type="entry name" value="Ribosomal_uS4"/>
</dbReference>
<dbReference type="InterPro" id="IPR005709">
    <property type="entry name" value="Ribosomal_uS4_bac-type"/>
</dbReference>
<dbReference type="InterPro" id="IPR018079">
    <property type="entry name" value="Ribosomal_uS4_CS"/>
</dbReference>
<dbReference type="InterPro" id="IPR001912">
    <property type="entry name" value="Ribosomal_uS4_N"/>
</dbReference>
<dbReference type="InterPro" id="IPR002942">
    <property type="entry name" value="S4_RNA-bd"/>
</dbReference>
<dbReference type="InterPro" id="IPR036986">
    <property type="entry name" value="S4_RNA-bd_sf"/>
</dbReference>
<dbReference type="NCBIfam" id="NF003717">
    <property type="entry name" value="PRK05327.1"/>
    <property type="match status" value="1"/>
</dbReference>
<dbReference type="NCBIfam" id="TIGR01017">
    <property type="entry name" value="rpsD_bact"/>
    <property type="match status" value="1"/>
</dbReference>
<dbReference type="PANTHER" id="PTHR11831">
    <property type="entry name" value="30S 40S RIBOSOMAL PROTEIN"/>
    <property type="match status" value="1"/>
</dbReference>
<dbReference type="PANTHER" id="PTHR11831:SF4">
    <property type="entry name" value="SMALL RIBOSOMAL SUBUNIT PROTEIN US4M"/>
    <property type="match status" value="1"/>
</dbReference>
<dbReference type="Pfam" id="PF00163">
    <property type="entry name" value="Ribosomal_S4"/>
    <property type="match status" value="1"/>
</dbReference>
<dbReference type="Pfam" id="PF01479">
    <property type="entry name" value="S4"/>
    <property type="match status" value="1"/>
</dbReference>
<dbReference type="SMART" id="SM01390">
    <property type="entry name" value="Ribosomal_S4"/>
    <property type="match status" value="1"/>
</dbReference>
<dbReference type="SMART" id="SM00363">
    <property type="entry name" value="S4"/>
    <property type="match status" value="1"/>
</dbReference>
<dbReference type="SUPFAM" id="SSF55174">
    <property type="entry name" value="Alpha-L RNA-binding motif"/>
    <property type="match status" value="1"/>
</dbReference>
<dbReference type="PROSITE" id="PS00632">
    <property type="entry name" value="RIBOSOMAL_S4"/>
    <property type="match status" value="1"/>
</dbReference>
<dbReference type="PROSITE" id="PS50889">
    <property type="entry name" value="S4"/>
    <property type="match status" value="1"/>
</dbReference>
<accession>O20291</accession>
<keyword id="KW-0150">Chloroplast</keyword>
<keyword id="KW-0934">Plastid</keyword>
<keyword id="KW-0687">Ribonucleoprotein</keyword>
<keyword id="KW-0689">Ribosomal protein</keyword>
<keyword id="KW-0694">RNA-binding</keyword>
<keyword id="KW-0699">rRNA-binding</keyword>
<proteinExistence type="inferred from homology"/>
<comment type="function">
    <text evidence="1">One of the primary rRNA binding proteins, it binds directly to 16S rRNA where it nucleates assembly of the body of the 30S subunit.</text>
</comment>
<comment type="function">
    <text evidence="1">With S5 and S12 plays an important role in translational accuracy.</text>
</comment>
<comment type="subunit">
    <text evidence="1">Part of the 30S ribosomal subunit. Contacts protein S5. The interaction surface between S4 and S5 is involved in control of translational fidelity (By similarity).</text>
</comment>
<comment type="subcellular location">
    <subcellularLocation>
        <location>Plastid</location>
        <location>Chloroplast</location>
    </subcellularLocation>
</comment>
<comment type="similarity">
    <text evidence="2">Belongs to the universal ribosomal protein uS4 family.</text>
</comment>
<protein>
    <recommendedName>
        <fullName evidence="2">Small ribosomal subunit protein uS4c</fullName>
    </recommendedName>
    <alternativeName>
        <fullName>30S ribosomal protein S4, chloroplastic</fullName>
    </alternativeName>
</protein>
<gene>
    <name type="primary">rps4</name>
</gene>